<protein>
    <recommendedName>
        <fullName evidence="1">dITP/XTP pyrophosphatase</fullName>
        <ecNumber evidence="1">3.6.1.66</ecNumber>
    </recommendedName>
    <alternativeName>
        <fullName evidence="1">Non-canonical purine NTP pyrophosphatase</fullName>
    </alternativeName>
    <alternativeName>
        <fullName evidence="1">Non-standard purine NTP pyrophosphatase</fullName>
    </alternativeName>
    <alternativeName>
        <fullName evidence="1">Nucleoside-triphosphate diphosphatase</fullName>
    </alternativeName>
    <alternativeName>
        <fullName evidence="1">Nucleoside-triphosphate pyrophosphatase</fullName>
        <shortName evidence="1">NTPase</shortName>
    </alternativeName>
</protein>
<name>IXTPA_MYCPA</name>
<evidence type="ECO:0000255" key="1">
    <source>
        <dbReference type="HAMAP-Rule" id="MF_01405"/>
    </source>
</evidence>
<feature type="chain" id="PRO_0000178195" description="dITP/XTP pyrophosphatase">
    <location>
        <begin position="1"/>
        <end position="204"/>
    </location>
</feature>
<feature type="active site" description="Proton acceptor" evidence="1">
    <location>
        <position position="73"/>
    </location>
</feature>
<feature type="binding site" evidence="1">
    <location>
        <begin position="8"/>
        <end position="13"/>
    </location>
    <ligand>
        <name>substrate</name>
    </ligand>
</feature>
<feature type="binding site" evidence="1">
    <location>
        <position position="73"/>
    </location>
    <ligand>
        <name>Mg(2+)</name>
        <dbReference type="ChEBI" id="CHEBI:18420"/>
    </ligand>
</feature>
<feature type="binding site" evidence="1">
    <location>
        <position position="74"/>
    </location>
    <ligand>
        <name>substrate</name>
    </ligand>
</feature>
<feature type="binding site" evidence="1">
    <location>
        <begin position="155"/>
        <end position="158"/>
    </location>
    <ligand>
        <name>substrate</name>
    </ligand>
</feature>
<feature type="binding site" evidence="1">
    <location>
        <position position="179"/>
    </location>
    <ligand>
        <name>substrate</name>
    </ligand>
</feature>
<feature type="binding site" evidence="1">
    <location>
        <begin position="184"/>
        <end position="185"/>
    </location>
    <ligand>
        <name>substrate</name>
    </ligand>
</feature>
<accession>Q73X89</accession>
<gene>
    <name type="ordered locus">MAP_2420c</name>
</gene>
<organism>
    <name type="scientific">Mycolicibacterium paratuberculosis (strain ATCC BAA-968 / K-10)</name>
    <name type="common">Mycobacterium paratuberculosis</name>
    <dbReference type="NCBI Taxonomy" id="262316"/>
    <lineage>
        <taxon>Bacteria</taxon>
        <taxon>Bacillati</taxon>
        <taxon>Actinomycetota</taxon>
        <taxon>Actinomycetes</taxon>
        <taxon>Mycobacteriales</taxon>
        <taxon>Mycobacteriaceae</taxon>
        <taxon>Mycobacterium</taxon>
        <taxon>Mycobacterium avium complex (MAC)</taxon>
    </lineage>
</organism>
<proteinExistence type="inferred from homology"/>
<sequence length="204" mass="21236">MSPLLVASRNRKKLAELRRVLDAAGVTGLTLVSLDDVAPFEEAPETGAVFEENALAKARDAFAATGLASVADDSGLEVAALNGMPGVLSARWSGRHGDDAANTALLLAQLRDVPDERRAASFVSACALVSASGEVVVRGEWPGRIAREPRGDGGFGYDPVFVPDDAAGRTAAQLSPAEKDAVSHRGRALRLLVPALETLARARG</sequence>
<dbReference type="EC" id="3.6.1.66" evidence="1"/>
<dbReference type="EMBL" id="AE016958">
    <property type="protein sequence ID" value="AAS04737.1"/>
    <property type="molecule type" value="Genomic_DNA"/>
</dbReference>
<dbReference type="SMR" id="Q73X89"/>
<dbReference type="STRING" id="262316.MAP_2420c"/>
<dbReference type="KEGG" id="mpa:MAP_2420c"/>
<dbReference type="eggNOG" id="COG0127">
    <property type="taxonomic scope" value="Bacteria"/>
</dbReference>
<dbReference type="HOGENOM" id="CLU_082080_0_1_11"/>
<dbReference type="Proteomes" id="UP000000580">
    <property type="component" value="Chromosome"/>
</dbReference>
<dbReference type="GO" id="GO:0005829">
    <property type="term" value="C:cytosol"/>
    <property type="evidence" value="ECO:0007669"/>
    <property type="project" value="TreeGrafter"/>
</dbReference>
<dbReference type="GO" id="GO:0035870">
    <property type="term" value="F:dITP diphosphatase activity"/>
    <property type="evidence" value="ECO:0007669"/>
    <property type="project" value="RHEA"/>
</dbReference>
<dbReference type="GO" id="GO:0036220">
    <property type="term" value="F:ITP diphosphatase activity"/>
    <property type="evidence" value="ECO:0007669"/>
    <property type="project" value="UniProtKB-EC"/>
</dbReference>
<dbReference type="GO" id="GO:0046872">
    <property type="term" value="F:metal ion binding"/>
    <property type="evidence" value="ECO:0007669"/>
    <property type="project" value="UniProtKB-KW"/>
</dbReference>
<dbReference type="GO" id="GO:0000166">
    <property type="term" value="F:nucleotide binding"/>
    <property type="evidence" value="ECO:0007669"/>
    <property type="project" value="UniProtKB-KW"/>
</dbReference>
<dbReference type="GO" id="GO:0017111">
    <property type="term" value="F:ribonucleoside triphosphate phosphatase activity"/>
    <property type="evidence" value="ECO:0007669"/>
    <property type="project" value="InterPro"/>
</dbReference>
<dbReference type="GO" id="GO:0036222">
    <property type="term" value="F:XTP diphosphatase activity"/>
    <property type="evidence" value="ECO:0007669"/>
    <property type="project" value="RHEA"/>
</dbReference>
<dbReference type="GO" id="GO:0009117">
    <property type="term" value="P:nucleotide metabolic process"/>
    <property type="evidence" value="ECO:0007669"/>
    <property type="project" value="UniProtKB-KW"/>
</dbReference>
<dbReference type="GO" id="GO:0009146">
    <property type="term" value="P:purine nucleoside triphosphate catabolic process"/>
    <property type="evidence" value="ECO:0007669"/>
    <property type="project" value="UniProtKB-UniRule"/>
</dbReference>
<dbReference type="CDD" id="cd00515">
    <property type="entry name" value="HAM1"/>
    <property type="match status" value="1"/>
</dbReference>
<dbReference type="FunFam" id="3.90.950.10:FF:000001">
    <property type="entry name" value="dITP/XTP pyrophosphatase"/>
    <property type="match status" value="1"/>
</dbReference>
<dbReference type="Gene3D" id="3.90.950.10">
    <property type="match status" value="1"/>
</dbReference>
<dbReference type="HAMAP" id="MF_01405">
    <property type="entry name" value="Non_canon_purine_NTPase"/>
    <property type="match status" value="1"/>
</dbReference>
<dbReference type="InterPro" id="IPR020922">
    <property type="entry name" value="dITP/XTP_pyrophosphatase"/>
</dbReference>
<dbReference type="InterPro" id="IPR029001">
    <property type="entry name" value="ITPase-like_fam"/>
</dbReference>
<dbReference type="InterPro" id="IPR002637">
    <property type="entry name" value="RdgB/HAM1"/>
</dbReference>
<dbReference type="NCBIfam" id="TIGR00042">
    <property type="entry name" value="RdgB/HAM1 family non-canonical purine NTP pyrophosphatase"/>
    <property type="match status" value="1"/>
</dbReference>
<dbReference type="PANTHER" id="PTHR11067:SF9">
    <property type="entry name" value="INOSINE TRIPHOSPHATE PYROPHOSPHATASE"/>
    <property type="match status" value="1"/>
</dbReference>
<dbReference type="PANTHER" id="PTHR11067">
    <property type="entry name" value="INOSINE TRIPHOSPHATE PYROPHOSPHATASE/HAM1 PROTEIN"/>
    <property type="match status" value="1"/>
</dbReference>
<dbReference type="Pfam" id="PF01725">
    <property type="entry name" value="Ham1p_like"/>
    <property type="match status" value="1"/>
</dbReference>
<dbReference type="SUPFAM" id="SSF52972">
    <property type="entry name" value="ITPase-like"/>
    <property type="match status" value="1"/>
</dbReference>
<keyword id="KW-0378">Hydrolase</keyword>
<keyword id="KW-0460">Magnesium</keyword>
<keyword id="KW-0479">Metal-binding</keyword>
<keyword id="KW-0546">Nucleotide metabolism</keyword>
<keyword id="KW-0547">Nucleotide-binding</keyword>
<keyword id="KW-1185">Reference proteome</keyword>
<reference key="1">
    <citation type="journal article" date="2005" name="Proc. Natl. Acad. Sci. U.S.A.">
        <title>The complete genome sequence of Mycobacterium avium subspecies paratuberculosis.</title>
        <authorList>
            <person name="Li L."/>
            <person name="Bannantine J.P."/>
            <person name="Zhang Q."/>
            <person name="Amonsin A."/>
            <person name="May B.J."/>
            <person name="Alt D."/>
            <person name="Banerji N."/>
            <person name="Kanjilal S."/>
            <person name="Kapur V."/>
        </authorList>
    </citation>
    <scope>NUCLEOTIDE SEQUENCE [LARGE SCALE GENOMIC DNA]</scope>
    <source>
        <strain>ATCC BAA-968 / K-10</strain>
    </source>
</reference>
<comment type="function">
    <text evidence="1">Pyrophosphatase that catalyzes the hydrolysis of nucleoside triphosphates to their monophosphate derivatives, with a high preference for the non-canonical purine nucleotides XTP (xanthosine triphosphate), dITP (deoxyinosine triphosphate) and ITP. Seems to function as a house-cleaning enzyme that removes non-canonical purine nucleotides from the nucleotide pool, thus preventing their incorporation into DNA/RNA and avoiding chromosomal lesions.</text>
</comment>
<comment type="catalytic activity">
    <reaction evidence="1">
        <text>XTP + H2O = XMP + diphosphate + H(+)</text>
        <dbReference type="Rhea" id="RHEA:28610"/>
        <dbReference type="ChEBI" id="CHEBI:15377"/>
        <dbReference type="ChEBI" id="CHEBI:15378"/>
        <dbReference type="ChEBI" id="CHEBI:33019"/>
        <dbReference type="ChEBI" id="CHEBI:57464"/>
        <dbReference type="ChEBI" id="CHEBI:61314"/>
        <dbReference type="EC" id="3.6.1.66"/>
    </reaction>
</comment>
<comment type="catalytic activity">
    <reaction evidence="1">
        <text>dITP + H2O = dIMP + diphosphate + H(+)</text>
        <dbReference type="Rhea" id="RHEA:28342"/>
        <dbReference type="ChEBI" id="CHEBI:15377"/>
        <dbReference type="ChEBI" id="CHEBI:15378"/>
        <dbReference type="ChEBI" id="CHEBI:33019"/>
        <dbReference type="ChEBI" id="CHEBI:61194"/>
        <dbReference type="ChEBI" id="CHEBI:61382"/>
        <dbReference type="EC" id="3.6.1.66"/>
    </reaction>
</comment>
<comment type="catalytic activity">
    <reaction evidence="1">
        <text>ITP + H2O = IMP + diphosphate + H(+)</text>
        <dbReference type="Rhea" id="RHEA:29399"/>
        <dbReference type="ChEBI" id="CHEBI:15377"/>
        <dbReference type="ChEBI" id="CHEBI:15378"/>
        <dbReference type="ChEBI" id="CHEBI:33019"/>
        <dbReference type="ChEBI" id="CHEBI:58053"/>
        <dbReference type="ChEBI" id="CHEBI:61402"/>
        <dbReference type="EC" id="3.6.1.66"/>
    </reaction>
</comment>
<comment type="cofactor">
    <cofactor evidence="1">
        <name>Mg(2+)</name>
        <dbReference type="ChEBI" id="CHEBI:18420"/>
    </cofactor>
    <text evidence="1">Binds 1 Mg(2+) ion per subunit.</text>
</comment>
<comment type="subunit">
    <text evidence="1">Homodimer.</text>
</comment>
<comment type="similarity">
    <text evidence="1">Belongs to the HAM1 NTPase family.</text>
</comment>